<reference evidence="9" key="1">
    <citation type="journal article" date="1998" name="Science">
        <title>Genome sequence of the nematode C. elegans: a platform for investigating biology.</title>
        <authorList>
            <consortium name="The C. elegans sequencing consortium"/>
        </authorList>
    </citation>
    <scope>NUCLEOTIDE SEQUENCE [LARGE SCALE GENOMIC DNA]</scope>
    <source>
        <strain evidence="9">Bristol N2</strain>
    </source>
</reference>
<reference evidence="6" key="2">
    <citation type="journal article" date="2015" name="Nucleic Acids Res.">
        <title>The ribonucleotidyl transferase USIP-1 acts with SART3 to promote U6 snRNA recycling.</title>
        <authorList>
            <person name="Rueegger S."/>
            <person name="Miki T.S."/>
            <person name="Hess D."/>
            <person name="Grosshans H."/>
        </authorList>
    </citation>
    <scope>FUNCTION</scope>
    <scope>CATALYTIC ACTIVITY</scope>
    <scope>IDENTIFICATION IN A COMPLEX WITH SART-3 AND U6 SNRNA</scope>
    <scope>SUBCELLULAR LOCATION</scope>
    <scope>TISSUE SPECIFICITY</scope>
    <scope>MUTAGENESIS OF 183-ASP--ASP-185</scope>
</reference>
<keyword id="KW-0460">Magnesium</keyword>
<keyword id="KW-0464">Manganese</keyword>
<keyword id="KW-0479">Metal-binding</keyword>
<keyword id="KW-0548">Nucleotidyltransferase</keyword>
<keyword id="KW-0539">Nucleus</keyword>
<keyword id="KW-1185">Reference proteome</keyword>
<keyword id="KW-0808">Transferase</keyword>
<organism evidence="9">
    <name type="scientific">Caenorhabditis elegans</name>
    <dbReference type="NCBI Taxonomy" id="6239"/>
    <lineage>
        <taxon>Eukaryota</taxon>
        <taxon>Metazoa</taxon>
        <taxon>Ecdysozoa</taxon>
        <taxon>Nematoda</taxon>
        <taxon>Chromadorea</taxon>
        <taxon>Rhabditida</taxon>
        <taxon>Rhabditina</taxon>
        <taxon>Rhabditomorpha</taxon>
        <taxon>Rhabditoidea</taxon>
        <taxon>Rhabditidae</taxon>
        <taxon>Peloderinae</taxon>
        <taxon>Caenorhabditis</taxon>
    </lineage>
</organism>
<protein>
    <recommendedName>
        <fullName evidence="6">U6 snRNA-specific terminal uridylyltransferase</fullName>
        <shortName evidence="5">TUTase</shortName>
        <ecNumber evidence="4">2.7.7.52</ecNumber>
    </recommendedName>
    <alternativeName>
        <fullName evidence="6">PAP-associated domain-containing protein</fullName>
    </alternativeName>
    <alternativeName>
        <fullName evidence="5">U6 snRNA-interacting protein</fullName>
    </alternativeName>
</protein>
<sequence length="662" mass="75288">MSSNLQLVETFDSRQFVVARWNRNDTTAMVPSAIAVVVFVESVEYKLGCKEKIGYSPTPEDQDQFMILQMESIDEANRICHDSIAKGFAINNTKIVFTPLLGLNGFRLQDAIDFMKTSQPHFNNDELLEVLTMAICQELPERLKILEDGFSFIEQGVSELIQNSACEMFGSFASPVRRNGYSDIDINVESVSAPGQRVSTNVRPLNEVVANPKCLITHPLTKSELETYPQEEIIKILYRCFNENSAFKTKFEMRFLPARTPIIVFKNIEVEGMNVSYDLSVHNQISVEKASLLHEFIVKDKSKGSRMKNAMMFIVHWAKSNKLLSGDYPEEKLEVKTKLNSYIINQLVIHFVQAATNKVHVNPQAKRDSRVNEYNFDTLFGDYCKFFRELFKYYANFDFTNKAIYGKKAMQKKTLSSAHGGVEESPLMLMDPMDITHNISAKVTEDAVKLLNGLIRNALFILKQNHFHINYLLETNTMATMLMKSREPKISISTRVTDGAEHQYLSVQLPAVVITSSDLFLLLTRVLRFNVCPNEQGPSVVDLCTPTGAIFLVTSRAWVGRRNTKRALKNSRHDLTPLQIDVMCSDKYDYEEDIAELRISMSTVPGTRIRLACIDIMRGQVSEVRDAIHFLIDQFINNNYDDLEKNGVQTISRIPIAAPTWP</sequence>
<evidence type="ECO:0000250" key="1">
    <source>
        <dbReference type="UniProtKB" id="Q9H6E5"/>
    </source>
</evidence>
<evidence type="ECO:0000250" key="2">
    <source>
        <dbReference type="UniProtKB" id="Q9NVV4"/>
    </source>
</evidence>
<evidence type="ECO:0000255" key="3"/>
<evidence type="ECO:0000269" key="4">
    <source>
    </source>
</evidence>
<evidence type="ECO:0000303" key="5">
    <source>
    </source>
</evidence>
<evidence type="ECO:0000305" key="6"/>
<evidence type="ECO:0000305" key="7">
    <source>
    </source>
</evidence>
<evidence type="ECO:0000312" key="8">
    <source>
        <dbReference type="EMBL" id="CAB01456.1"/>
    </source>
</evidence>
<evidence type="ECO:0000312" key="9">
    <source>
        <dbReference type="Proteomes" id="UP000001940"/>
    </source>
</evidence>
<evidence type="ECO:0000312" key="10">
    <source>
        <dbReference type="WormBase" id="ZK863.4"/>
    </source>
</evidence>
<feature type="chain" id="PRO_0000449384" description="U6 snRNA-specific terminal uridylyltransferase">
    <location>
        <begin position="1"/>
        <end position="662"/>
    </location>
</feature>
<feature type="domain" description="PAP-associated" evidence="3">
    <location>
        <begin position="384"/>
        <end position="437"/>
    </location>
</feature>
<feature type="binding site" evidence="1">
    <location>
        <position position="183"/>
    </location>
    <ligand>
        <name>Mg(2+)</name>
        <dbReference type="ChEBI" id="CHEBI:18420"/>
        <note>catalytic</note>
    </ligand>
</feature>
<feature type="binding site" evidence="1">
    <location>
        <position position="185"/>
    </location>
    <ligand>
        <name>Mg(2+)</name>
        <dbReference type="ChEBI" id="CHEBI:18420"/>
        <note>catalytic</note>
    </ligand>
</feature>
<feature type="mutagenesis site" description="Loss of terminal uridylyltransferase activity." evidence="4">
    <original>DID</original>
    <variation>AIA</variation>
    <location>
        <begin position="183"/>
        <end position="185"/>
    </location>
</feature>
<proteinExistence type="evidence at protein level"/>
<dbReference type="EC" id="2.7.7.52" evidence="4"/>
<dbReference type="EMBL" id="BX284605">
    <property type="protein sequence ID" value="CAB01456.1"/>
    <property type="molecule type" value="Genomic_DNA"/>
</dbReference>
<dbReference type="PIR" id="T28064">
    <property type="entry name" value="T28064"/>
</dbReference>
<dbReference type="RefSeq" id="NP_506056.1">
    <property type="nucleotide sequence ID" value="NM_073655.9"/>
</dbReference>
<dbReference type="DIP" id="DIP-24847N"/>
<dbReference type="FunCoup" id="Q23652">
    <property type="interactions" value="898"/>
</dbReference>
<dbReference type="STRING" id="6239.ZK863.4.1"/>
<dbReference type="PaxDb" id="6239-ZK863.4.1"/>
<dbReference type="PeptideAtlas" id="Q23652"/>
<dbReference type="EnsemblMetazoa" id="ZK863.4.1">
    <property type="protein sequence ID" value="ZK863.4.1"/>
    <property type="gene ID" value="WBGene00014124"/>
</dbReference>
<dbReference type="EnsemblMetazoa" id="ZK863.4.2">
    <property type="protein sequence ID" value="ZK863.4.2"/>
    <property type="gene ID" value="WBGene00014124"/>
</dbReference>
<dbReference type="GeneID" id="179670"/>
<dbReference type="KEGG" id="cel:CELE_ZK863.4"/>
<dbReference type="UCSC" id="ZK863.4.1">
    <property type="organism name" value="c. elegans"/>
</dbReference>
<dbReference type="AGR" id="WB:WBGene00014124"/>
<dbReference type="CTD" id="179670"/>
<dbReference type="WormBase" id="ZK863.4">
    <property type="protein sequence ID" value="CE23469"/>
    <property type="gene ID" value="WBGene00014124"/>
    <property type="gene designation" value="usip-1"/>
</dbReference>
<dbReference type="eggNOG" id="KOG2277">
    <property type="taxonomic scope" value="Eukaryota"/>
</dbReference>
<dbReference type="HOGENOM" id="CLU_414027_0_0_1"/>
<dbReference type="InParanoid" id="Q23652"/>
<dbReference type="OMA" id="DCTHNIS"/>
<dbReference type="OrthoDB" id="434989at2759"/>
<dbReference type="PhylomeDB" id="Q23652"/>
<dbReference type="PRO" id="PR:Q23652"/>
<dbReference type="Proteomes" id="UP000001940">
    <property type="component" value="Chromosome V"/>
</dbReference>
<dbReference type="Bgee" id="WBGene00014124">
    <property type="expression patterns" value="Expressed in germ line (C elegans) and 4 other cell types or tissues"/>
</dbReference>
<dbReference type="GO" id="GO:0005654">
    <property type="term" value="C:nucleoplasm"/>
    <property type="evidence" value="ECO:0000314"/>
    <property type="project" value="WormBase"/>
</dbReference>
<dbReference type="GO" id="GO:0046872">
    <property type="term" value="F:metal ion binding"/>
    <property type="evidence" value="ECO:0007669"/>
    <property type="project" value="UniProtKB-KW"/>
</dbReference>
<dbReference type="GO" id="GO:0050265">
    <property type="term" value="F:RNA uridylyltransferase activity"/>
    <property type="evidence" value="ECO:0000314"/>
    <property type="project" value="WormBase"/>
</dbReference>
<dbReference type="GO" id="GO:0034477">
    <property type="term" value="P:U6 snRNA 3'-end processing"/>
    <property type="evidence" value="ECO:0000314"/>
    <property type="project" value="WormBase"/>
</dbReference>
<dbReference type="Gene3D" id="1.10.1410.10">
    <property type="match status" value="1"/>
</dbReference>
<dbReference type="Gene3D" id="3.30.460.10">
    <property type="entry name" value="Beta Polymerase, domain 2"/>
    <property type="match status" value="1"/>
</dbReference>
<dbReference type="InterPro" id="IPR043519">
    <property type="entry name" value="NT_sf"/>
</dbReference>
<dbReference type="InterPro" id="IPR002058">
    <property type="entry name" value="PAP_assoc"/>
</dbReference>
<dbReference type="PANTHER" id="PTHR12271">
    <property type="entry name" value="POLY A POLYMERASE CID PAP -RELATED"/>
    <property type="match status" value="1"/>
</dbReference>
<dbReference type="PANTHER" id="PTHR12271:SF137">
    <property type="entry name" value="U6 SNRNA-SPECIFIC TERMINAL URIDYLYLTRANSFERASE"/>
    <property type="match status" value="1"/>
</dbReference>
<dbReference type="Pfam" id="PF03828">
    <property type="entry name" value="PAP_assoc"/>
    <property type="match status" value="1"/>
</dbReference>
<dbReference type="SUPFAM" id="SSF81301">
    <property type="entry name" value="Nucleotidyltransferase"/>
    <property type="match status" value="1"/>
</dbReference>
<dbReference type="SUPFAM" id="SSF81631">
    <property type="entry name" value="PAP/OAS1 substrate-binding domain"/>
    <property type="match status" value="1"/>
</dbReference>
<comment type="function">
    <text evidence="4">Acts as a specific terminal uridylyltransferase for U6 snRNA. Responsible for the addition of UTP at the 3' end of U6 snRNA which stabilizes U6 snRNA (PubMed:25753661). Does not have activity towards modified uridine containing 3'-monophosphorylation or 2'-O-methylation (PubMed:25753661).</text>
</comment>
<comment type="catalytic activity">
    <reaction evidence="4">
        <text>RNA(n) + UTP = RNA(n)-3'-uridine ribonucleotide + diphosphate</text>
        <dbReference type="Rhea" id="RHEA:14785"/>
        <dbReference type="Rhea" id="RHEA-COMP:14527"/>
        <dbReference type="Rhea" id="RHEA-COMP:17348"/>
        <dbReference type="ChEBI" id="CHEBI:33019"/>
        <dbReference type="ChEBI" id="CHEBI:46398"/>
        <dbReference type="ChEBI" id="CHEBI:140395"/>
        <dbReference type="ChEBI" id="CHEBI:173116"/>
        <dbReference type="EC" id="2.7.7.52"/>
    </reaction>
</comment>
<comment type="cofactor">
    <cofactor evidence="2">
        <name>Mg(2+)</name>
        <dbReference type="ChEBI" id="CHEBI:18420"/>
    </cofactor>
    <cofactor evidence="2">
        <name>Mn(2+)</name>
        <dbReference type="ChEBI" id="CHEBI:29035"/>
    </cofactor>
    <text evidence="1">Binds 1 divalent cation per subunit.</text>
</comment>
<comment type="subunit">
    <text evidence="4">Forms a complex composed of sart-3, terminal uridylyltransferase usip-1 and U6 snRNA; complex formation is mediated by usip-1 and sart-3 binding to U6 snRNA.</text>
</comment>
<comment type="subcellular location">
    <subcellularLocation>
        <location evidence="7">Nucleus</location>
        <location evidence="7">Nucleoplasm</location>
    </subcellularLocation>
</comment>
<comment type="tissue specificity">
    <text evidence="4">Ubiquitously expressed.</text>
</comment>
<comment type="similarity">
    <text evidence="6">Belongs to the DNA polymerase type-B-like family.</text>
</comment>
<gene>
    <name evidence="5 10" type="primary">usip-1</name>
    <name evidence="8" type="ORF">ZK863.4</name>
</gene>
<accession>Q23652</accession>
<name>USIP1_CAEEL</name>